<sequence length="133" mass="15386">MTLTSAHPKSKLMKRFAALGPYLREGQCQNDHFFFDCLAVCINVKLAPEKREFWGWWIELEPSAGRFTYVYQLGLFNKEGNWNAEKISDPEVQDKLESTLRSFHLRLEEMLASIDMKLEPAADFNDQPVKLSA</sequence>
<gene>
    <name evidence="1" type="primary">crl</name>
    <name type="ordered locus">YPN_0870</name>
    <name type="ORF">YP516_0941</name>
</gene>
<comment type="function">
    <text evidence="1">Binds to the sigma-S subunit of RNA polymerase, activating expression of sigma-S-regulated genes. Stimulates RNA polymerase holoenzyme formation and may bind to several other sigma factors, such as sigma-70 and sigma-32.</text>
</comment>
<comment type="subcellular location">
    <subcellularLocation>
        <location evidence="1">Cytoplasm</location>
    </subcellularLocation>
</comment>
<comment type="similarity">
    <text evidence="1">Belongs to the Crl family.</text>
</comment>
<protein>
    <recommendedName>
        <fullName evidence="1">Sigma factor-binding protein Crl</fullName>
    </recommendedName>
</protein>
<evidence type="ECO:0000255" key="1">
    <source>
        <dbReference type="HAMAP-Rule" id="MF_01178"/>
    </source>
</evidence>
<proteinExistence type="inferred from homology"/>
<feature type="chain" id="PRO_0000268915" description="Sigma factor-binding protein Crl">
    <location>
        <begin position="1"/>
        <end position="133"/>
    </location>
</feature>
<feature type="region of interest" description="Essential for activity" evidence="1">
    <location>
        <begin position="99"/>
        <end position="122"/>
    </location>
</feature>
<organism>
    <name type="scientific">Yersinia pestis bv. Antiqua (strain Nepal516)</name>
    <dbReference type="NCBI Taxonomy" id="377628"/>
    <lineage>
        <taxon>Bacteria</taxon>
        <taxon>Pseudomonadati</taxon>
        <taxon>Pseudomonadota</taxon>
        <taxon>Gammaproteobacteria</taxon>
        <taxon>Enterobacterales</taxon>
        <taxon>Yersiniaceae</taxon>
        <taxon>Yersinia</taxon>
    </lineage>
</organism>
<reference key="1">
    <citation type="journal article" date="2006" name="J. Bacteriol.">
        <title>Complete genome sequence of Yersinia pestis strains Antiqua and Nepal516: evidence of gene reduction in an emerging pathogen.</title>
        <authorList>
            <person name="Chain P.S.G."/>
            <person name="Hu P."/>
            <person name="Malfatti S.A."/>
            <person name="Radnedge L."/>
            <person name="Larimer F."/>
            <person name="Vergez L.M."/>
            <person name="Worsham P."/>
            <person name="Chu M.C."/>
            <person name="Andersen G.L."/>
        </authorList>
    </citation>
    <scope>NUCLEOTIDE SEQUENCE [LARGE SCALE GENOMIC DNA]</scope>
    <source>
        <strain>Nepal516</strain>
    </source>
</reference>
<reference key="2">
    <citation type="submission" date="2009-04" db="EMBL/GenBank/DDBJ databases">
        <title>Yersinia pestis Nepal516A whole genome shotgun sequencing project.</title>
        <authorList>
            <person name="Plunkett G. III"/>
            <person name="Anderson B.D."/>
            <person name="Baumler D.J."/>
            <person name="Burland V."/>
            <person name="Cabot E.L."/>
            <person name="Glasner J.D."/>
            <person name="Mau B."/>
            <person name="Neeno-Eckwall E."/>
            <person name="Perna N.T."/>
            <person name="Munk A.C."/>
            <person name="Tapia R."/>
            <person name="Green L.D."/>
            <person name="Rogers Y.C."/>
            <person name="Detter J.C."/>
            <person name="Bruce D.C."/>
            <person name="Brettin T.S."/>
        </authorList>
    </citation>
    <scope>NUCLEOTIDE SEQUENCE [LARGE SCALE GENOMIC DNA]</scope>
    <source>
        <strain>Nepal516</strain>
    </source>
</reference>
<accession>Q1CLC8</accession>
<accession>C4GQE1</accession>
<keyword id="KW-0010">Activator</keyword>
<keyword id="KW-0963">Cytoplasm</keyword>
<keyword id="KW-0804">Transcription</keyword>
<keyword id="KW-0805">Transcription regulation</keyword>
<name>CRL_YERPN</name>
<dbReference type="EMBL" id="CP000305">
    <property type="protein sequence ID" value="ABG17202.1"/>
    <property type="molecule type" value="Genomic_DNA"/>
</dbReference>
<dbReference type="EMBL" id="ACNQ01000008">
    <property type="protein sequence ID" value="EEO77282.1"/>
    <property type="molecule type" value="Genomic_DNA"/>
</dbReference>
<dbReference type="RefSeq" id="WP_002208702.1">
    <property type="nucleotide sequence ID" value="NZ_ACNQ01000008.1"/>
</dbReference>
<dbReference type="SMR" id="Q1CLC8"/>
<dbReference type="GeneID" id="57975495"/>
<dbReference type="KEGG" id="ypn:YPN_0870"/>
<dbReference type="HOGENOM" id="CLU_136773_0_0_6"/>
<dbReference type="Proteomes" id="UP000008936">
    <property type="component" value="Chromosome"/>
</dbReference>
<dbReference type="GO" id="GO:0005737">
    <property type="term" value="C:cytoplasm"/>
    <property type="evidence" value="ECO:0007669"/>
    <property type="project" value="UniProtKB-SubCell"/>
</dbReference>
<dbReference type="GO" id="GO:0045893">
    <property type="term" value="P:positive regulation of DNA-templated transcription"/>
    <property type="evidence" value="ECO:0007669"/>
    <property type="project" value="UniProtKB-UniRule"/>
</dbReference>
<dbReference type="Gene3D" id="3.30.310.230">
    <property type="entry name" value="Sigma factor-binding protein Crl monomer"/>
    <property type="match status" value="1"/>
</dbReference>
<dbReference type="HAMAP" id="MF_01178">
    <property type="entry name" value="Crl"/>
    <property type="match status" value="1"/>
</dbReference>
<dbReference type="InterPro" id="IPR009986">
    <property type="entry name" value="Tscrpt_reg_Crl"/>
</dbReference>
<dbReference type="InterPro" id="IPR038208">
    <property type="entry name" value="Tscrpt_reg_Crl_sf"/>
</dbReference>
<dbReference type="NCBIfam" id="NF008217">
    <property type="entry name" value="PRK10984.1"/>
    <property type="match status" value="1"/>
</dbReference>
<dbReference type="Pfam" id="PF07417">
    <property type="entry name" value="Crl"/>
    <property type="match status" value="1"/>
</dbReference>